<protein>
    <recommendedName>
        <fullName>Putative uncharacterized protein YDL118W</fullName>
    </recommendedName>
</protein>
<reference key="1">
    <citation type="journal article" date="1997" name="Nature">
        <title>The nucleotide sequence of Saccharomyces cerevisiae chromosome IV.</title>
        <authorList>
            <person name="Jacq C."/>
            <person name="Alt-Moerbe J."/>
            <person name="Andre B."/>
            <person name="Arnold W."/>
            <person name="Bahr A."/>
            <person name="Ballesta J.P.G."/>
            <person name="Bargues M."/>
            <person name="Baron L."/>
            <person name="Becker A."/>
            <person name="Biteau N."/>
            <person name="Bloecker H."/>
            <person name="Blugeon C."/>
            <person name="Boskovic J."/>
            <person name="Brandt P."/>
            <person name="Brueckner M."/>
            <person name="Buitrago M.J."/>
            <person name="Coster F."/>
            <person name="Delaveau T."/>
            <person name="del Rey F."/>
            <person name="Dujon B."/>
            <person name="Eide L.G."/>
            <person name="Garcia-Cantalejo J.M."/>
            <person name="Goffeau A."/>
            <person name="Gomez-Peris A."/>
            <person name="Granotier C."/>
            <person name="Hanemann V."/>
            <person name="Hankeln T."/>
            <person name="Hoheisel J.D."/>
            <person name="Jaeger W."/>
            <person name="Jimenez A."/>
            <person name="Jonniaux J.-L."/>
            <person name="Kraemer C."/>
            <person name="Kuester H."/>
            <person name="Laamanen P."/>
            <person name="Legros Y."/>
            <person name="Louis E.J."/>
            <person name="Moeller-Rieker S."/>
            <person name="Monnet A."/>
            <person name="Moro M."/>
            <person name="Mueller-Auer S."/>
            <person name="Nussbaumer B."/>
            <person name="Paricio N."/>
            <person name="Paulin L."/>
            <person name="Perea J."/>
            <person name="Perez-Alonso M."/>
            <person name="Perez-Ortin J.E."/>
            <person name="Pohl T.M."/>
            <person name="Prydz H."/>
            <person name="Purnelle B."/>
            <person name="Rasmussen S.W."/>
            <person name="Remacha M.A."/>
            <person name="Revuelta J.L."/>
            <person name="Rieger M."/>
            <person name="Salom D."/>
            <person name="Saluz H.P."/>
            <person name="Saiz J.E."/>
            <person name="Saren A.-M."/>
            <person name="Schaefer M."/>
            <person name="Scharfe M."/>
            <person name="Schmidt E.R."/>
            <person name="Schneider C."/>
            <person name="Scholler P."/>
            <person name="Schwarz S."/>
            <person name="Soler-Mira A."/>
            <person name="Urrestarazu L.A."/>
            <person name="Verhasselt P."/>
            <person name="Vissers S."/>
            <person name="Voet M."/>
            <person name="Volckaert G."/>
            <person name="Wagner G."/>
            <person name="Wambutt R."/>
            <person name="Wedler E."/>
            <person name="Wedler H."/>
            <person name="Woelfl S."/>
            <person name="Harris D.E."/>
            <person name="Bowman S."/>
            <person name="Brown D."/>
            <person name="Churcher C.M."/>
            <person name="Connor R."/>
            <person name="Dedman K."/>
            <person name="Gentles S."/>
            <person name="Hamlin N."/>
            <person name="Hunt S."/>
            <person name="Jones L."/>
            <person name="McDonald S."/>
            <person name="Murphy L.D."/>
            <person name="Niblett D."/>
            <person name="Odell C."/>
            <person name="Oliver K."/>
            <person name="Rajandream M.A."/>
            <person name="Richards C."/>
            <person name="Shore L."/>
            <person name="Walsh S.V."/>
            <person name="Barrell B.G."/>
            <person name="Dietrich F.S."/>
            <person name="Mulligan J.T."/>
            <person name="Allen E."/>
            <person name="Araujo R."/>
            <person name="Aviles E."/>
            <person name="Berno A."/>
            <person name="Carpenter J."/>
            <person name="Chen E."/>
            <person name="Cherry J.M."/>
            <person name="Chung E."/>
            <person name="Duncan M."/>
            <person name="Hunicke-Smith S."/>
            <person name="Hyman R.W."/>
            <person name="Komp C."/>
            <person name="Lashkari D."/>
            <person name="Lew H."/>
            <person name="Lin D."/>
            <person name="Mosedale D."/>
            <person name="Nakahara K."/>
            <person name="Namath A."/>
            <person name="Oefner P."/>
            <person name="Oh C."/>
            <person name="Petel F.X."/>
            <person name="Roberts D."/>
            <person name="Schramm S."/>
            <person name="Schroeder M."/>
            <person name="Shogren T."/>
            <person name="Shroff N."/>
            <person name="Winant A."/>
            <person name="Yelton M.A."/>
            <person name="Botstein D."/>
            <person name="Davis R.W."/>
            <person name="Johnston M."/>
            <person name="Andrews S."/>
            <person name="Brinkman R."/>
            <person name="Cooper J."/>
            <person name="Ding H."/>
            <person name="Du Z."/>
            <person name="Favello A."/>
            <person name="Fulton L."/>
            <person name="Gattung S."/>
            <person name="Greco T."/>
            <person name="Hallsworth K."/>
            <person name="Hawkins J."/>
            <person name="Hillier L.W."/>
            <person name="Jier M."/>
            <person name="Johnson D."/>
            <person name="Johnston L."/>
            <person name="Kirsten J."/>
            <person name="Kucaba T."/>
            <person name="Langston Y."/>
            <person name="Latreille P."/>
            <person name="Le T."/>
            <person name="Mardis E."/>
            <person name="Menezes S."/>
            <person name="Miller N."/>
            <person name="Nhan M."/>
            <person name="Pauley A."/>
            <person name="Peluso D."/>
            <person name="Rifkin L."/>
            <person name="Riles L."/>
            <person name="Taich A."/>
            <person name="Trevaskis E."/>
            <person name="Vignati D."/>
            <person name="Wilcox L."/>
            <person name="Wohldman P."/>
            <person name="Vaudin M."/>
            <person name="Wilson R."/>
            <person name="Waterston R."/>
            <person name="Albermann K."/>
            <person name="Hani J."/>
            <person name="Heumann K."/>
            <person name="Kleine K."/>
            <person name="Mewes H.-W."/>
            <person name="Zollner A."/>
            <person name="Zaccaria P."/>
        </authorList>
    </citation>
    <scope>NUCLEOTIDE SEQUENCE [LARGE SCALE GENOMIC DNA]</scope>
    <source>
        <strain>ATCC 204508 / S288c</strain>
    </source>
</reference>
<reference key="2">
    <citation type="journal article" date="2014" name="G3 (Bethesda)">
        <title>The reference genome sequence of Saccharomyces cerevisiae: Then and now.</title>
        <authorList>
            <person name="Engel S.R."/>
            <person name="Dietrich F.S."/>
            <person name="Fisk D.G."/>
            <person name="Binkley G."/>
            <person name="Balakrishnan R."/>
            <person name="Costanzo M.C."/>
            <person name="Dwight S.S."/>
            <person name="Hitz B.C."/>
            <person name="Karra K."/>
            <person name="Nash R.S."/>
            <person name="Weng S."/>
            <person name="Wong E.D."/>
            <person name="Lloyd P."/>
            <person name="Skrzypek M.S."/>
            <person name="Miyasato S.R."/>
            <person name="Simison M."/>
            <person name="Cherry J.M."/>
        </authorList>
    </citation>
    <scope>GENOME REANNOTATION</scope>
    <source>
        <strain>ATCC 204508 / S288c</strain>
    </source>
</reference>
<reference key="3">
    <citation type="journal article" date="2007" name="Genome Res.">
        <title>Approaching a complete repository of sequence-verified protein-encoding clones for Saccharomyces cerevisiae.</title>
        <authorList>
            <person name="Hu Y."/>
            <person name="Rolfs A."/>
            <person name="Bhullar B."/>
            <person name="Murthy T.V.S."/>
            <person name="Zhu C."/>
            <person name="Berger M.F."/>
            <person name="Camargo A.A."/>
            <person name="Kelley F."/>
            <person name="McCarron S."/>
            <person name="Jepson D."/>
            <person name="Richardson A."/>
            <person name="Raphael J."/>
            <person name="Moreira D."/>
            <person name="Taycher E."/>
            <person name="Zuo D."/>
            <person name="Mohr S."/>
            <person name="Kane M.F."/>
            <person name="Williamson J."/>
            <person name="Simpson A.J.G."/>
            <person name="Bulyk M.L."/>
            <person name="Harlow E."/>
            <person name="Marsischky G."/>
            <person name="Kolodner R.D."/>
            <person name="LaBaer J."/>
        </authorList>
    </citation>
    <scope>NUCLEOTIDE SEQUENCE [GENOMIC DNA]</scope>
    <source>
        <strain>ATCC 204508 / S288c</strain>
    </source>
</reference>
<reference key="4">
    <citation type="journal article" date="2003" name="Science">
        <title>Yeast genes that enhance the toxicity of a mutant huntingtin fragment or alpha-synuclein.</title>
        <authorList>
            <person name="Willingham S."/>
            <person name="Outeiro T.F."/>
            <person name="DeVit M.J."/>
            <person name="Lindquist S.L."/>
            <person name="Muchowski P.J."/>
        </authorList>
    </citation>
    <scope>DISRUPTION PHENOTYPE</scope>
</reference>
<reference key="5">
    <citation type="journal article" date="2004" name="Proc. Natl. Acad. Sci. U.S.A.">
        <title>A genome-wide screen for Saccharomyces cerevisiae deletion mutants that affect telomere length.</title>
        <authorList>
            <person name="Askree S.H."/>
            <person name="Yehuda T."/>
            <person name="Smolikov S."/>
            <person name="Gurevich R."/>
            <person name="Hawk J."/>
            <person name="Coker C."/>
            <person name="Krauskopf A."/>
            <person name="Kupiec M."/>
            <person name="McEachern M.J."/>
        </authorList>
    </citation>
    <scope>DISRUPTION PHENOTYPE</scope>
</reference>
<dbReference type="EMBL" id="Z74167">
    <property type="protein sequence ID" value="CAA98687.1"/>
    <property type="molecule type" value="Genomic_DNA"/>
</dbReference>
<dbReference type="EMBL" id="AY693331">
    <property type="protein sequence ID" value="AAT93350.1"/>
    <property type="molecule type" value="Genomic_DNA"/>
</dbReference>
<dbReference type="PIR" id="S67661">
    <property type="entry name" value="S67661"/>
</dbReference>
<dbReference type="DIP" id="DIP-4734N"/>
<dbReference type="IntAct" id="Q07535">
    <property type="interactions" value="1"/>
</dbReference>
<dbReference type="PaxDb" id="4932-YDL118W"/>
<dbReference type="EnsemblFungi" id="YDL118W_mRNA">
    <property type="protein sequence ID" value="YDL118W"/>
    <property type="gene ID" value="YDL118W"/>
</dbReference>
<dbReference type="AGR" id="SGD:S000002276"/>
<dbReference type="SGD" id="S000002276">
    <property type="gene designation" value="YDL118W"/>
</dbReference>
<dbReference type="HOGENOM" id="CLU_1982840_0_0_1"/>
<sequence length="126" mass="14135">MFESFVNEGTAFLLFAKDERIRFKHDKYKALPIDVRNAEGNVPLHSCRGLSISFKFFHNVAFLSCWILVFKRSKGCNATADVSPPKKPPIKCDEFLGLVACSVMYAASQIVYLLVVPAVLFAFLLV</sequence>
<evidence type="ECO:0000269" key="1">
    <source>
    </source>
</evidence>
<evidence type="ECO:0000269" key="2">
    <source>
    </source>
</evidence>
<evidence type="ECO:0000305" key="3"/>
<evidence type="ECO:0000305" key="4">
    <source>
    </source>
</evidence>
<organism>
    <name type="scientific">Saccharomyces cerevisiae (strain ATCC 204508 / S288c)</name>
    <name type="common">Baker's yeast</name>
    <dbReference type="NCBI Taxonomy" id="559292"/>
    <lineage>
        <taxon>Eukaryota</taxon>
        <taxon>Fungi</taxon>
        <taxon>Dikarya</taxon>
        <taxon>Ascomycota</taxon>
        <taxon>Saccharomycotina</taxon>
        <taxon>Saccharomycetes</taxon>
        <taxon>Saccharomycetales</taxon>
        <taxon>Saccharomycetaceae</taxon>
        <taxon>Saccharomyces</taxon>
    </lineage>
</organism>
<accession>Q07535</accession>
<comment type="disruption phenotype">
    <text evidence="1 2">Negatively affects telomere maintenance producing very short telomeres. Enhances the toxicity of heterologously expressed alpha-synuclein.</text>
</comment>
<comment type="miscellaneous">
    <text evidence="3">Almost completely overlaps YDL119C. Disruption phenotypes caused by deletion of this gene may also be a result of a defect in its overlapping gene.</text>
</comment>
<comment type="caution">
    <text evidence="4">Product of a dubious gene prediction unlikely to encode a functional protein. Because of that it is not part of the S.cerevisiae S288c complete/reference proteome set.</text>
</comment>
<feature type="chain" id="PRO_0000277621" description="Putative uncharacterized protein YDL118W">
    <location>
        <begin position="1"/>
        <end position="126"/>
    </location>
</feature>
<name>YD118_YEAST</name>
<proteinExistence type="uncertain"/>
<gene>
    <name type="ordered locus">YDL118W</name>
</gene>